<proteinExistence type="inferred from homology"/>
<feature type="chain" id="PRO_0000361252" description="Putative S-adenosyl-L-methionine-dependent methyltransferase MUL_4763">
    <location>
        <begin position="1"/>
        <end position="310"/>
    </location>
</feature>
<feature type="binding site" evidence="1">
    <location>
        <position position="137"/>
    </location>
    <ligand>
        <name>S-adenosyl-L-methionine</name>
        <dbReference type="ChEBI" id="CHEBI:59789"/>
    </ligand>
</feature>
<feature type="binding site" evidence="1">
    <location>
        <begin position="166"/>
        <end position="167"/>
    </location>
    <ligand>
        <name>S-adenosyl-L-methionine</name>
        <dbReference type="ChEBI" id="CHEBI:59789"/>
    </ligand>
</feature>
<sequence length="310" mass="34214">MTELDEVDSLRSDGDSWTVTESVGATALGVAAARAVETAGANPLIRDEFAPILVSSAGPAWARLADPDIGWLDDDPHGQRLHRLGCDYQAVRTHFSDEYFAAAAGAGIEQAVILAAGLDCRAYRLNWPPEAVVFEIDQPKVLEYKAQILESHGVTAAATRHGVAVDLREDWPAALLRAGFDRDRPTAWLAEGLLPYLPGDAQDRLFEMITDLSAPRSRIAVESFTMNLTGNKQRWNRMRDRLGLDINVEALTYREPGRTDAAEWLANHGWQVYSVSNREEMARLGRPVPEDLVDEAITTTLLRASLEILR</sequence>
<dbReference type="EC" id="2.1.1.-"/>
<dbReference type="EMBL" id="CP000325">
    <property type="protein sequence ID" value="ABL06683.1"/>
    <property type="molecule type" value="Genomic_DNA"/>
</dbReference>
<dbReference type="RefSeq" id="WP_011742275.1">
    <property type="nucleotide sequence ID" value="NC_008611.1"/>
</dbReference>
<dbReference type="SMR" id="A0PWG4"/>
<dbReference type="KEGG" id="mul:MUL_4763"/>
<dbReference type="eggNOG" id="COG3315">
    <property type="taxonomic scope" value="Bacteria"/>
</dbReference>
<dbReference type="HOGENOM" id="CLU_056160_2_1_11"/>
<dbReference type="Proteomes" id="UP000000765">
    <property type="component" value="Chromosome"/>
</dbReference>
<dbReference type="GO" id="GO:0008168">
    <property type="term" value="F:methyltransferase activity"/>
    <property type="evidence" value="ECO:0007669"/>
    <property type="project" value="UniProtKB-KW"/>
</dbReference>
<dbReference type="GO" id="GO:0032259">
    <property type="term" value="P:methylation"/>
    <property type="evidence" value="ECO:0007669"/>
    <property type="project" value="UniProtKB-KW"/>
</dbReference>
<dbReference type="Gene3D" id="3.40.50.150">
    <property type="entry name" value="Vaccinia Virus protein VP39"/>
    <property type="match status" value="1"/>
</dbReference>
<dbReference type="InterPro" id="IPR007213">
    <property type="entry name" value="Ppm1/Ppm2/Tcmp"/>
</dbReference>
<dbReference type="InterPro" id="IPR029063">
    <property type="entry name" value="SAM-dependent_MTases_sf"/>
</dbReference>
<dbReference type="InterPro" id="IPR011610">
    <property type="entry name" value="SAM_mthyl_Trfase_ML2640-like"/>
</dbReference>
<dbReference type="NCBIfam" id="TIGR00027">
    <property type="entry name" value="mthyl_TIGR00027"/>
    <property type="match status" value="1"/>
</dbReference>
<dbReference type="PANTHER" id="PTHR43619">
    <property type="entry name" value="S-ADENOSYL-L-METHIONINE-DEPENDENT METHYLTRANSFERASE YKTD-RELATED"/>
    <property type="match status" value="1"/>
</dbReference>
<dbReference type="PANTHER" id="PTHR43619:SF2">
    <property type="entry name" value="S-ADENOSYL-L-METHIONINE-DEPENDENT METHYLTRANSFERASES SUPERFAMILY PROTEIN"/>
    <property type="match status" value="1"/>
</dbReference>
<dbReference type="Pfam" id="PF04072">
    <property type="entry name" value="LCM"/>
    <property type="match status" value="1"/>
</dbReference>
<dbReference type="SUPFAM" id="SSF53335">
    <property type="entry name" value="S-adenosyl-L-methionine-dependent methyltransferases"/>
    <property type="match status" value="1"/>
</dbReference>
<name>Y4763_MYCUA</name>
<keyword id="KW-0489">Methyltransferase</keyword>
<keyword id="KW-0949">S-adenosyl-L-methionine</keyword>
<keyword id="KW-0808">Transferase</keyword>
<organism>
    <name type="scientific">Mycobacterium ulcerans (strain Agy99)</name>
    <dbReference type="NCBI Taxonomy" id="362242"/>
    <lineage>
        <taxon>Bacteria</taxon>
        <taxon>Bacillati</taxon>
        <taxon>Actinomycetota</taxon>
        <taxon>Actinomycetes</taxon>
        <taxon>Mycobacteriales</taxon>
        <taxon>Mycobacteriaceae</taxon>
        <taxon>Mycobacterium</taxon>
        <taxon>Mycobacterium ulcerans group</taxon>
    </lineage>
</organism>
<gene>
    <name type="ordered locus">MUL_4763</name>
</gene>
<comment type="function">
    <text evidence="1">Exhibits S-adenosyl-L-methionine-dependent methyltransferase activity.</text>
</comment>
<comment type="similarity">
    <text evidence="2">Belongs to the UPF0677 family.</text>
</comment>
<accession>A0PWG4</accession>
<evidence type="ECO:0000250" key="1"/>
<evidence type="ECO:0000305" key="2"/>
<protein>
    <recommendedName>
        <fullName>Putative S-adenosyl-L-methionine-dependent methyltransferase MUL_4763</fullName>
        <ecNumber>2.1.1.-</ecNumber>
    </recommendedName>
</protein>
<reference key="1">
    <citation type="journal article" date="2007" name="Genome Res.">
        <title>Reductive evolution and niche adaptation inferred from the genome of Mycobacterium ulcerans, the causative agent of Buruli ulcer.</title>
        <authorList>
            <person name="Stinear T.P."/>
            <person name="Seemann T."/>
            <person name="Pidot S."/>
            <person name="Frigui W."/>
            <person name="Reysset G."/>
            <person name="Garnier T."/>
            <person name="Meurice G."/>
            <person name="Simon D."/>
            <person name="Bouchier C."/>
            <person name="Ma L."/>
            <person name="Tichit M."/>
            <person name="Porter J.L."/>
            <person name="Ryan J."/>
            <person name="Johnson P.D.R."/>
            <person name="Davies J.K."/>
            <person name="Jenkin G.A."/>
            <person name="Small P.L.C."/>
            <person name="Jones L.M."/>
            <person name="Tekaia F."/>
            <person name="Laval F."/>
            <person name="Daffe M."/>
            <person name="Parkhill J."/>
            <person name="Cole S.T."/>
        </authorList>
    </citation>
    <scope>NUCLEOTIDE SEQUENCE [LARGE SCALE GENOMIC DNA]</scope>
    <source>
        <strain>Agy99</strain>
    </source>
</reference>